<organism>
    <name type="scientific">Phalaenopsis aphrodite subsp. formosana</name>
    <name type="common">Moth orchid</name>
    <dbReference type="NCBI Taxonomy" id="308872"/>
    <lineage>
        <taxon>Eukaryota</taxon>
        <taxon>Viridiplantae</taxon>
        <taxon>Streptophyta</taxon>
        <taxon>Embryophyta</taxon>
        <taxon>Tracheophyta</taxon>
        <taxon>Spermatophyta</taxon>
        <taxon>Magnoliopsida</taxon>
        <taxon>Liliopsida</taxon>
        <taxon>Asparagales</taxon>
        <taxon>Orchidaceae</taxon>
        <taxon>Epidendroideae</taxon>
        <taxon>Vandeae</taxon>
        <taxon>Aeridinae</taxon>
        <taxon>Phalaenopsis</taxon>
    </lineage>
</organism>
<evidence type="ECO:0000255" key="1">
    <source>
        <dbReference type="HAMAP-Rule" id="MF_01347"/>
    </source>
</evidence>
<proteinExistence type="inferred from homology"/>
<keyword id="KW-0066">ATP synthesis</keyword>
<keyword id="KW-0067">ATP-binding</keyword>
<keyword id="KW-0139">CF(1)</keyword>
<keyword id="KW-0150">Chloroplast</keyword>
<keyword id="KW-0375">Hydrogen ion transport</keyword>
<keyword id="KW-0406">Ion transport</keyword>
<keyword id="KW-0472">Membrane</keyword>
<keyword id="KW-0547">Nucleotide-binding</keyword>
<keyword id="KW-0934">Plastid</keyword>
<keyword id="KW-0793">Thylakoid</keyword>
<keyword id="KW-1278">Translocase</keyword>
<keyword id="KW-0813">Transport</keyword>
<sequence>MRNNPITSDPVVSTLKEQNQGRIAQIIGPVLDVIFPSGKMPNIYNALIIKGRDTVGHQINVTCEVQQLLGNNRVRAVAMSATDGLMRGMKVIDTGAPLSVPVGGATLGRIFNVLGEPVDNLGPVDTRTTFPIHRSAPAFIQLDTKLSIFETGIKVVDLLAPYRRGGKIGLFGGAGVGKTVLIMELINNIAKAHGGVSVFGGVGERTREGNDLYMEMKESGVINEKNIAESKVALVYGQMNEPPGARMRVGLTALTMAEYFRDVNEQDVLLFIDNIFRFVQAGSEVSALLGRMPSAVGYQPTLSTEMGSLQERITSTKEGSITSIQAVYVPADDLTDPAPATTFAHLDATTVLSRGLAAKGIYPAVDPLDSTSTMLQPRIVGEEHYETAQRVKQTSQRYKELQDIIAILGLDELSEEDRLTVARARKIERFLSQPFFVAEVFTGSPGKYVGLAETIRGFQFILSGELDGLPEQAFYLVGNIDEATAKAMNLEEESKLKK</sequence>
<protein>
    <recommendedName>
        <fullName evidence="1">ATP synthase subunit beta, chloroplastic</fullName>
        <ecNumber evidence="1">7.1.2.2</ecNumber>
    </recommendedName>
    <alternativeName>
        <fullName evidence="1">ATP synthase F1 sector subunit beta</fullName>
    </alternativeName>
    <alternativeName>
        <fullName evidence="1">F-ATPase subunit beta</fullName>
    </alternativeName>
</protein>
<reference key="1">
    <citation type="journal article" date="2006" name="Mol. Biol. Evol.">
        <title>The chloroplast genome of Phalaenopsis aphrodite (Orchidaceae): comparative analysis of evolutionary rate with that of grasses and its phylogenetic implications.</title>
        <authorList>
            <person name="Chang C.-C."/>
            <person name="Lin H.-C."/>
            <person name="Lin I.-P."/>
            <person name="Chow T.-Y."/>
            <person name="Chen H.-H."/>
            <person name="Chen W.-H."/>
            <person name="Cheng C.-H."/>
            <person name="Lin C.-Y."/>
            <person name="Liu S.-M."/>
            <person name="Chang C.-C."/>
            <person name="Chaw S.-M."/>
        </authorList>
    </citation>
    <scope>NUCLEOTIDE SEQUENCE [LARGE SCALE GENOMIC DNA]</scope>
    <source>
        <strain>cv. Taisugar TS-97</strain>
    </source>
</reference>
<dbReference type="EC" id="7.1.2.2" evidence="1"/>
<dbReference type="EMBL" id="AY916449">
    <property type="protein sequence ID" value="AAW82507.1"/>
    <property type="molecule type" value="Genomic_DNA"/>
</dbReference>
<dbReference type="RefSeq" id="YP_358583.1">
    <property type="nucleotide sequence ID" value="NC_007499.1"/>
</dbReference>
<dbReference type="SMR" id="Q3BAN5"/>
<dbReference type="GeneID" id="3741686"/>
<dbReference type="GO" id="GO:0009535">
    <property type="term" value="C:chloroplast thylakoid membrane"/>
    <property type="evidence" value="ECO:0007669"/>
    <property type="project" value="UniProtKB-SubCell"/>
</dbReference>
<dbReference type="GO" id="GO:0005739">
    <property type="term" value="C:mitochondrion"/>
    <property type="evidence" value="ECO:0007669"/>
    <property type="project" value="GOC"/>
</dbReference>
<dbReference type="GO" id="GO:0045259">
    <property type="term" value="C:proton-transporting ATP synthase complex"/>
    <property type="evidence" value="ECO:0007669"/>
    <property type="project" value="UniProtKB-KW"/>
</dbReference>
<dbReference type="GO" id="GO:0005524">
    <property type="term" value="F:ATP binding"/>
    <property type="evidence" value="ECO:0007669"/>
    <property type="project" value="UniProtKB-UniRule"/>
</dbReference>
<dbReference type="GO" id="GO:0016887">
    <property type="term" value="F:ATP hydrolysis activity"/>
    <property type="evidence" value="ECO:0007669"/>
    <property type="project" value="InterPro"/>
</dbReference>
<dbReference type="GO" id="GO:0046933">
    <property type="term" value="F:proton-transporting ATP synthase activity, rotational mechanism"/>
    <property type="evidence" value="ECO:0007669"/>
    <property type="project" value="UniProtKB-UniRule"/>
</dbReference>
<dbReference type="GO" id="GO:0042776">
    <property type="term" value="P:proton motive force-driven mitochondrial ATP synthesis"/>
    <property type="evidence" value="ECO:0007669"/>
    <property type="project" value="TreeGrafter"/>
</dbReference>
<dbReference type="CDD" id="cd18110">
    <property type="entry name" value="ATP-synt_F1_beta_C"/>
    <property type="match status" value="1"/>
</dbReference>
<dbReference type="CDD" id="cd18115">
    <property type="entry name" value="ATP-synt_F1_beta_N"/>
    <property type="match status" value="1"/>
</dbReference>
<dbReference type="CDD" id="cd01133">
    <property type="entry name" value="F1-ATPase_beta_CD"/>
    <property type="match status" value="1"/>
</dbReference>
<dbReference type="FunFam" id="1.10.1140.10:FF:000001">
    <property type="entry name" value="ATP synthase subunit beta"/>
    <property type="match status" value="1"/>
</dbReference>
<dbReference type="FunFam" id="3.40.50.300:FF:000004">
    <property type="entry name" value="ATP synthase subunit beta"/>
    <property type="match status" value="1"/>
</dbReference>
<dbReference type="FunFam" id="2.40.10.170:FF:000002">
    <property type="entry name" value="ATP synthase subunit beta, chloroplastic"/>
    <property type="match status" value="1"/>
</dbReference>
<dbReference type="Gene3D" id="2.40.10.170">
    <property type="match status" value="1"/>
</dbReference>
<dbReference type="Gene3D" id="1.10.1140.10">
    <property type="entry name" value="Bovine Mitochondrial F1-atpase, Atp Synthase Beta Chain, Chain D, domain 3"/>
    <property type="match status" value="1"/>
</dbReference>
<dbReference type="Gene3D" id="3.40.50.300">
    <property type="entry name" value="P-loop containing nucleotide triphosphate hydrolases"/>
    <property type="match status" value="1"/>
</dbReference>
<dbReference type="HAMAP" id="MF_01347">
    <property type="entry name" value="ATP_synth_beta_bact"/>
    <property type="match status" value="1"/>
</dbReference>
<dbReference type="InterPro" id="IPR003593">
    <property type="entry name" value="AAA+_ATPase"/>
</dbReference>
<dbReference type="InterPro" id="IPR055190">
    <property type="entry name" value="ATP-synt_VA_C"/>
</dbReference>
<dbReference type="InterPro" id="IPR005722">
    <property type="entry name" value="ATP_synth_F1_bsu"/>
</dbReference>
<dbReference type="InterPro" id="IPR020003">
    <property type="entry name" value="ATPase_a/bsu_AS"/>
</dbReference>
<dbReference type="InterPro" id="IPR050053">
    <property type="entry name" value="ATPase_alpha/beta_chains"/>
</dbReference>
<dbReference type="InterPro" id="IPR004100">
    <property type="entry name" value="ATPase_F1/V1/A1_a/bsu_N"/>
</dbReference>
<dbReference type="InterPro" id="IPR036121">
    <property type="entry name" value="ATPase_F1/V1/A1_a/bsu_N_sf"/>
</dbReference>
<dbReference type="InterPro" id="IPR000194">
    <property type="entry name" value="ATPase_F1/V1/A1_a/bsu_nucl-bd"/>
</dbReference>
<dbReference type="InterPro" id="IPR024034">
    <property type="entry name" value="ATPase_F1/V1_b/a_C"/>
</dbReference>
<dbReference type="InterPro" id="IPR027417">
    <property type="entry name" value="P-loop_NTPase"/>
</dbReference>
<dbReference type="NCBIfam" id="TIGR01039">
    <property type="entry name" value="atpD"/>
    <property type="match status" value="1"/>
</dbReference>
<dbReference type="PANTHER" id="PTHR15184">
    <property type="entry name" value="ATP SYNTHASE"/>
    <property type="match status" value="1"/>
</dbReference>
<dbReference type="PANTHER" id="PTHR15184:SF71">
    <property type="entry name" value="ATP SYNTHASE SUBUNIT BETA, MITOCHONDRIAL"/>
    <property type="match status" value="1"/>
</dbReference>
<dbReference type="Pfam" id="PF00006">
    <property type="entry name" value="ATP-synt_ab"/>
    <property type="match status" value="1"/>
</dbReference>
<dbReference type="Pfam" id="PF02874">
    <property type="entry name" value="ATP-synt_ab_N"/>
    <property type="match status" value="1"/>
</dbReference>
<dbReference type="Pfam" id="PF22919">
    <property type="entry name" value="ATP-synt_VA_C"/>
    <property type="match status" value="1"/>
</dbReference>
<dbReference type="SMART" id="SM00382">
    <property type="entry name" value="AAA"/>
    <property type="match status" value="1"/>
</dbReference>
<dbReference type="SUPFAM" id="SSF47917">
    <property type="entry name" value="C-terminal domain of alpha and beta subunits of F1 ATP synthase"/>
    <property type="match status" value="1"/>
</dbReference>
<dbReference type="SUPFAM" id="SSF50615">
    <property type="entry name" value="N-terminal domain of alpha and beta subunits of F1 ATP synthase"/>
    <property type="match status" value="1"/>
</dbReference>
<dbReference type="SUPFAM" id="SSF52540">
    <property type="entry name" value="P-loop containing nucleoside triphosphate hydrolases"/>
    <property type="match status" value="1"/>
</dbReference>
<dbReference type="PROSITE" id="PS00152">
    <property type="entry name" value="ATPASE_ALPHA_BETA"/>
    <property type="match status" value="1"/>
</dbReference>
<feature type="chain" id="PRO_0000254509" description="ATP synthase subunit beta, chloroplastic">
    <location>
        <begin position="1"/>
        <end position="498"/>
    </location>
</feature>
<feature type="binding site" evidence="1">
    <location>
        <begin position="172"/>
        <end position="179"/>
    </location>
    <ligand>
        <name>ATP</name>
        <dbReference type="ChEBI" id="CHEBI:30616"/>
    </ligand>
</feature>
<gene>
    <name evidence="1" type="primary">atpB</name>
</gene>
<name>ATPB_PHAAO</name>
<geneLocation type="chloroplast"/>
<comment type="function">
    <text evidence="1">Produces ATP from ADP in the presence of a proton gradient across the membrane. The catalytic sites are hosted primarily by the beta subunits.</text>
</comment>
<comment type="catalytic activity">
    <reaction evidence="1">
        <text>ATP + H2O + 4 H(+)(in) = ADP + phosphate + 5 H(+)(out)</text>
        <dbReference type="Rhea" id="RHEA:57720"/>
        <dbReference type="ChEBI" id="CHEBI:15377"/>
        <dbReference type="ChEBI" id="CHEBI:15378"/>
        <dbReference type="ChEBI" id="CHEBI:30616"/>
        <dbReference type="ChEBI" id="CHEBI:43474"/>
        <dbReference type="ChEBI" id="CHEBI:456216"/>
        <dbReference type="EC" id="7.1.2.2"/>
    </reaction>
</comment>
<comment type="subunit">
    <text evidence="1">F-type ATPases have 2 components, CF(1) - the catalytic core - and CF(0) - the membrane proton channel. CF(1) has five subunits: alpha(3), beta(3), gamma(1), delta(1), epsilon(1). CF(0) has four main subunits: a(1), b(1), b'(1) and c(9-12).</text>
</comment>
<comment type="subcellular location">
    <subcellularLocation>
        <location evidence="1">Plastid</location>
        <location evidence="1">Chloroplast thylakoid membrane</location>
        <topology evidence="1">Peripheral membrane protein</topology>
    </subcellularLocation>
</comment>
<comment type="similarity">
    <text evidence="1">Belongs to the ATPase alpha/beta chains family.</text>
</comment>
<accession>Q3BAN5</accession>